<organism>
    <name type="scientific">Escherichia coli</name>
    <dbReference type="NCBI Taxonomy" id="562"/>
    <lineage>
        <taxon>Bacteria</taxon>
        <taxon>Pseudomonadati</taxon>
        <taxon>Pseudomonadota</taxon>
        <taxon>Gammaproteobacteria</taxon>
        <taxon>Enterobacterales</taxon>
        <taxon>Enterobacteriaceae</taxon>
        <taxon>Escherichia</taxon>
    </lineage>
</organism>
<evidence type="ECO:0000305" key="1"/>
<dbReference type="EMBL" id="X62157">
    <property type="protein sequence ID" value="CAA44083.1"/>
    <property type="molecule type" value="Genomic_DNA"/>
</dbReference>
<dbReference type="PIR" id="S25206">
    <property type="entry name" value="S25206"/>
</dbReference>
<dbReference type="SMR" id="P42184"/>
<dbReference type="IntAct" id="P42184">
    <property type="interactions" value="46"/>
</dbReference>
<dbReference type="GO" id="GO:0005576">
    <property type="term" value="C:extracellular region"/>
    <property type="evidence" value="ECO:0007669"/>
    <property type="project" value="UniProtKB-SubCell"/>
</dbReference>
<dbReference type="GO" id="GO:0009289">
    <property type="term" value="C:pilus"/>
    <property type="evidence" value="ECO:0007669"/>
    <property type="project" value="UniProtKB-SubCell"/>
</dbReference>
<dbReference type="GO" id="GO:0043709">
    <property type="term" value="P:cell adhesion involved in single-species biofilm formation"/>
    <property type="evidence" value="ECO:0007669"/>
    <property type="project" value="TreeGrafter"/>
</dbReference>
<dbReference type="Gene3D" id="2.60.40.1090">
    <property type="entry name" value="Fimbrial-type adhesion domain"/>
    <property type="match status" value="1"/>
</dbReference>
<dbReference type="InterPro" id="IPR000259">
    <property type="entry name" value="Adhesion_dom_fimbrial"/>
</dbReference>
<dbReference type="InterPro" id="IPR036937">
    <property type="entry name" value="Adhesion_dom_fimbrial_sf"/>
</dbReference>
<dbReference type="InterPro" id="IPR008966">
    <property type="entry name" value="Adhesion_dom_sf"/>
</dbReference>
<dbReference type="InterPro" id="IPR050263">
    <property type="entry name" value="Bact_Fimbrial_Adh_Pro"/>
</dbReference>
<dbReference type="PANTHER" id="PTHR33420:SF26">
    <property type="entry name" value="FIMBRIAL SUBUNIT"/>
    <property type="match status" value="1"/>
</dbReference>
<dbReference type="PANTHER" id="PTHR33420">
    <property type="entry name" value="FIMBRIAL SUBUNIT ELFA-RELATED"/>
    <property type="match status" value="1"/>
</dbReference>
<dbReference type="Pfam" id="PF00419">
    <property type="entry name" value="Fimbrial"/>
    <property type="match status" value="1"/>
</dbReference>
<dbReference type="SUPFAM" id="SSF49401">
    <property type="entry name" value="Bacterial adhesins"/>
    <property type="match status" value="1"/>
</dbReference>
<protein>
    <recommendedName>
        <fullName>PRS fimbrial major pilin protein</fullName>
        <shortName>PRS pili</shortName>
    </recommendedName>
</protein>
<feature type="chain" id="PRO_0000196349" description="PRS fimbrial major pilin protein">
    <location>
        <begin position="1" status="less than"/>
        <end position="161"/>
    </location>
</feature>
<feature type="non-terminal residue">
    <location>
        <position position="1"/>
    </location>
</feature>
<gene>
    <name type="primary">prsA</name>
</gene>
<sequence>GANAAPQGQGKVTFNGTVVDAPCGIDAQSADQSIEFGQVSKVLLNNGGSSTPKNFDIKLTDCDVTNYKKAGKAGTVSLTFSGVQAGTDMLQTVGTTGTAILVKDPHGKAVKFDGATATGVSSLVDGDNTIHFTALVKKDTSGNDVAEGAFSAVANFNLIYQ</sequence>
<reference key="1">
    <citation type="journal article" date="1992" name="Mol. Microbiol.">
        <title>Horizontal gene transfer of the Escherichia coli pap and prs pili operons as a mechanism for the development of tissue-specific adhesive properties.</title>
        <authorList>
            <person name="Marklund B.-I."/>
            <person name="Tennent J.M."/>
            <person name="Garcia E."/>
            <person name="Hamers A."/>
            <person name="Baga M."/>
            <person name="Lindberg F."/>
            <person name="Gaastra W."/>
            <person name="Normark S."/>
        </authorList>
    </citation>
    <scope>NUCLEOTIDE SEQUENCE [GENOMIC DNA]</scope>
    <source>
        <strain>1442</strain>
    </source>
</reference>
<comment type="function">
    <text>Fimbriae (also called pili), polar filaments radiating from the surface of the bacterium to a length of 0.5-1.5 micrometers and numbering 100-300 per cell, enable bacteria to colonize the epithelium of specific host organs.</text>
</comment>
<comment type="interaction">
    <interactant intactId="EBI-544466">
        <id>P42184</id>
    </interactant>
    <interactant intactId="EBI-544452">
        <id>P75869</id>
        <label>sxy</label>
    </interactant>
    <organismsDiffer>true</organismsDiffer>
    <experiments>2</experiments>
</comment>
<comment type="subcellular location">
    <subcellularLocation>
        <location>Secreted</location>
    </subcellularLocation>
    <subcellularLocation>
        <location>Fimbrium</location>
    </subcellularLocation>
</comment>
<comment type="similarity">
    <text evidence="1">Belongs to the fimbrial protein family.</text>
</comment>
<accession>P42184</accession>
<proteinExistence type="evidence at protein level"/>
<name>PRSA_ECOLX</name>
<keyword id="KW-0281">Fimbrium</keyword>
<keyword id="KW-0964">Secreted</keyword>